<gene>
    <name evidence="1" type="primary">secA</name>
    <name type="ordered locus">Daci_5497</name>
</gene>
<protein>
    <recommendedName>
        <fullName evidence="1">Protein translocase subunit SecA</fullName>
        <ecNumber evidence="1">7.4.2.8</ecNumber>
    </recommendedName>
</protein>
<reference key="1">
    <citation type="submission" date="2007-11" db="EMBL/GenBank/DDBJ databases">
        <title>Complete sequence of Delftia acidovorans DSM 14801 / SPH-1.</title>
        <authorList>
            <person name="Copeland A."/>
            <person name="Lucas S."/>
            <person name="Lapidus A."/>
            <person name="Barry K."/>
            <person name="Glavina del Rio T."/>
            <person name="Dalin E."/>
            <person name="Tice H."/>
            <person name="Pitluck S."/>
            <person name="Lowry S."/>
            <person name="Clum A."/>
            <person name="Schmutz J."/>
            <person name="Larimer F."/>
            <person name="Land M."/>
            <person name="Hauser L."/>
            <person name="Kyrpides N."/>
            <person name="Kim E."/>
            <person name="Schleheck D."/>
            <person name="Richardson P."/>
        </authorList>
    </citation>
    <scope>NUCLEOTIDE SEQUENCE [LARGE SCALE GENOMIC DNA]</scope>
    <source>
        <strain>DSM 14801 / SPH-1</strain>
    </source>
</reference>
<sequence length="915" mass="103596">MATNFLTKLFGSRNDRLLKQYRKTVVRINAMEPDYEKLSDEALRAKTQEFKERVAKGESLDDLLPEAFAVVREGSKRVMKMRHFDVQLLGGMALHYGKIAEMRTGEGKTLTATLPVYLNALSGNGVHVVTVNDYLANRDATWMAKLYNFLGLSVGINLPNMPREEKQAAYNSDITYGTNNEYGFDYLRDNMVYESGDRVQRVLNYAIVDEVDSILIDEARTPLIISGQAEDHTAMYVAMNKIVPNLVRQEGEADPRTGEGVTKPGDFTVDEKSHQVFLTDQGYEAAERLLGHAGMIAEGASLYDPANITLVHHLYAALRANNLYHRDQHYVVQNGEIVIVDEFTGRLMAGRRWSDGLHQAVEAKEGVTIQAENQTMASITFQNYFRLYGKLAGMTGTADTEAYEFQEIYGLETMVIPPNRPSKRDDQLDRVYKTTREKYEAAIRDIRECYERGQPVLVGTTSIENSEIIDELLNKENLPHQVLNAKQHEREADIVAQAGRPGMITIATNMAGRGTDIVLGGNIEKQVAAVEADESLSEAERQQRIEQMRADWKIEHDKVSALGGLRIIATERHESRRIDNQLRGRSGRQGDPGSSRFYLSLDDALMRIFAGDRVRAIMDRLKMPDGEAIEAGIVTRSIEGAQRKVEARNFDIRKQLLEYDDVSNDQRKVIYQQRNEILDASDLYEMITVMRDDVVSDLVRQYVPAESMEEQWDLAGLEKALESEWRIQLPLQSQVQSAHAITDEEILEKVLQAAREVFDAKVELIGRENFTQFQRAVLLQSFDTNWRDHLSALDYLRQGIHLRGYAQKQPKQEYKREAFELFRQLIDQVKTEVTRVLMTVQVQSREQVEQATEALEQRSAHSLEHMTYGAPSDGDIGGSVEDEPLELPEGARVGRNDPCPCGSGKKYKQCHGKLS</sequence>
<proteinExistence type="inferred from homology"/>
<organism>
    <name type="scientific">Delftia acidovorans (strain DSM 14801 / SPH-1)</name>
    <dbReference type="NCBI Taxonomy" id="398578"/>
    <lineage>
        <taxon>Bacteria</taxon>
        <taxon>Pseudomonadati</taxon>
        <taxon>Pseudomonadota</taxon>
        <taxon>Betaproteobacteria</taxon>
        <taxon>Burkholderiales</taxon>
        <taxon>Comamonadaceae</taxon>
        <taxon>Delftia</taxon>
    </lineage>
</organism>
<feature type="chain" id="PRO_1000145001" description="Protein translocase subunit SecA">
    <location>
        <begin position="1"/>
        <end position="915"/>
    </location>
</feature>
<feature type="region of interest" description="Disordered" evidence="2">
    <location>
        <begin position="866"/>
        <end position="915"/>
    </location>
</feature>
<feature type="compositionally biased region" description="Basic residues" evidence="2">
    <location>
        <begin position="905"/>
        <end position="915"/>
    </location>
</feature>
<feature type="binding site" evidence="1">
    <location>
        <position position="87"/>
    </location>
    <ligand>
        <name>ATP</name>
        <dbReference type="ChEBI" id="CHEBI:30616"/>
    </ligand>
</feature>
<feature type="binding site" evidence="1">
    <location>
        <begin position="105"/>
        <end position="109"/>
    </location>
    <ligand>
        <name>ATP</name>
        <dbReference type="ChEBI" id="CHEBI:30616"/>
    </ligand>
</feature>
<feature type="binding site" evidence="1">
    <location>
        <position position="516"/>
    </location>
    <ligand>
        <name>ATP</name>
        <dbReference type="ChEBI" id="CHEBI:30616"/>
    </ligand>
</feature>
<feature type="binding site" evidence="1">
    <location>
        <position position="899"/>
    </location>
    <ligand>
        <name>Zn(2+)</name>
        <dbReference type="ChEBI" id="CHEBI:29105"/>
    </ligand>
</feature>
<feature type="binding site" evidence="1">
    <location>
        <position position="901"/>
    </location>
    <ligand>
        <name>Zn(2+)</name>
        <dbReference type="ChEBI" id="CHEBI:29105"/>
    </ligand>
</feature>
<feature type="binding site" evidence="1">
    <location>
        <position position="910"/>
    </location>
    <ligand>
        <name>Zn(2+)</name>
        <dbReference type="ChEBI" id="CHEBI:29105"/>
    </ligand>
</feature>
<feature type="binding site" evidence="1">
    <location>
        <position position="911"/>
    </location>
    <ligand>
        <name>Zn(2+)</name>
        <dbReference type="ChEBI" id="CHEBI:29105"/>
    </ligand>
</feature>
<name>SECA_DELAS</name>
<dbReference type="EC" id="7.4.2.8" evidence="1"/>
<dbReference type="EMBL" id="CP000884">
    <property type="protein sequence ID" value="ABX38126.1"/>
    <property type="molecule type" value="Genomic_DNA"/>
</dbReference>
<dbReference type="RefSeq" id="WP_012207295.1">
    <property type="nucleotide sequence ID" value="NC_010002.1"/>
</dbReference>
<dbReference type="SMR" id="A9BP81"/>
<dbReference type="STRING" id="398578.Daci_5497"/>
<dbReference type="GeneID" id="24113613"/>
<dbReference type="KEGG" id="dac:Daci_5497"/>
<dbReference type="eggNOG" id="COG0653">
    <property type="taxonomic scope" value="Bacteria"/>
</dbReference>
<dbReference type="HOGENOM" id="CLU_005314_3_0_4"/>
<dbReference type="Proteomes" id="UP000000784">
    <property type="component" value="Chromosome"/>
</dbReference>
<dbReference type="GO" id="GO:0031522">
    <property type="term" value="C:cell envelope Sec protein transport complex"/>
    <property type="evidence" value="ECO:0007669"/>
    <property type="project" value="TreeGrafter"/>
</dbReference>
<dbReference type="GO" id="GO:0005829">
    <property type="term" value="C:cytosol"/>
    <property type="evidence" value="ECO:0007669"/>
    <property type="project" value="TreeGrafter"/>
</dbReference>
<dbReference type="GO" id="GO:0005886">
    <property type="term" value="C:plasma membrane"/>
    <property type="evidence" value="ECO:0007669"/>
    <property type="project" value="UniProtKB-SubCell"/>
</dbReference>
<dbReference type="GO" id="GO:0005524">
    <property type="term" value="F:ATP binding"/>
    <property type="evidence" value="ECO:0007669"/>
    <property type="project" value="UniProtKB-UniRule"/>
</dbReference>
<dbReference type="GO" id="GO:0046872">
    <property type="term" value="F:metal ion binding"/>
    <property type="evidence" value="ECO:0007669"/>
    <property type="project" value="UniProtKB-KW"/>
</dbReference>
<dbReference type="GO" id="GO:0008564">
    <property type="term" value="F:protein-exporting ATPase activity"/>
    <property type="evidence" value="ECO:0007669"/>
    <property type="project" value="UniProtKB-EC"/>
</dbReference>
<dbReference type="GO" id="GO:0065002">
    <property type="term" value="P:intracellular protein transmembrane transport"/>
    <property type="evidence" value="ECO:0007669"/>
    <property type="project" value="UniProtKB-UniRule"/>
</dbReference>
<dbReference type="GO" id="GO:0017038">
    <property type="term" value="P:protein import"/>
    <property type="evidence" value="ECO:0007669"/>
    <property type="project" value="InterPro"/>
</dbReference>
<dbReference type="GO" id="GO:0006605">
    <property type="term" value="P:protein targeting"/>
    <property type="evidence" value="ECO:0007669"/>
    <property type="project" value="UniProtKB-UniRule"/>
</dbReference>
<dbReference type="GO" id="GO:0043952">
    <property type="term" value="P:protein transport by the Sec complex"/>
    <property type="evidence" value="ECO:0007669"/>
    <property type="project" value="TreeGrafter"/>
</dbReference>
<dbReference type="CDD" id="cd17928">
    <property type="entry name" value="DEXDc_SecA"/>
    <property type="match status" value="1"/>
</dbReference>
<dbReference type="CDD" id="cd18803">
    <property type="entry name" value="SF2_C_secA"/>
    <property type="match status" value="1"/>
</dbReference>
<dbReference type="FunFam" id="3.40.50.300:FF:000081">
    <property type="entry name" value="Preprotein translocase subunit SecA"/>
    <property type="match status" value="1"/>
</dbReference>
<dbReference type="FunFam" id="3.40.50.300:FF:000113">
    <property type="entry name" value="Preprotein translocase subunit SecA"/>
    <property type="match status" value="1"/>
</dbReference>
<dbReference type="FunFam" id="3.90.1440.10:FF:000001">
    <property type="entry name" value="Preprotein translocase subunit SecA"/>
    <property type="match status" value="1"/>
</dbReference>
<dbReference type="FunFam" id="1.10.3060.10:FF:000003">
    <property type="entry name" value="Protein translocase subunit SecA"/>
    <property type="match status" value="1"/>
</dbReference>
<dbReference type="Gene3D" id="1.10.3060.10">
    <property type="entry name" value="Helical scaffold and wing domains of SecA"/>
    <property type="match status" value="1"/>
</dbReference>
<dbReference type="Gene3D" id="3.40.50.300">
    <property type="entry name" value="P-loop containing nucleotide triphosphate hydrolases"/>
    <property type="match status" value="2"/>
</dbReference>
<dbReference type="Gene3D" id="3.90.1440.10">
    <property type="entry name" value="SecA, preprotein cross-linking domain"/>
    <property type="match status" value="1"/>
</dbReference>
<dbReference type="HAMAP" id="MF_01382">
    <property type="entry name" value="SecA"/>
    <property type="match status" value="1"/>
</dbReference>
<dbReference type="InterPro" id="IPR014001">
    <property type="entry name" value="Helicase_ATP-bd"/>
</dbReference>
<dbReference type="InterPro" id="IPR001650">
    <property type="entry name" value="Helicase_C-like"/>
</dbReference>
<dbReference type="InterPro" id="IPR027417">
    <property type="entry name" value="P-loop_NTPase"/>
</dbReference>
<dbReference type="InterPro" id="IPR004027">
    <property type="entry name" value="SEC_C_motif"/>
</dbReference>
<dbReference type="InterPro" id="IPR000185">
    <property type="entry name" value="SecA"/>
</dbReference>
<dbReference type="InterPro" id="IPR020937">
    <property type="entry name" value="SecA_CS"/>
</dbReference>
<dbReference type="InterPro" id="IPR011115">
    <property type="entry name" value="SecA_DEAD"/>
</dbReference>
<dbReference type="InterPro" id="IPR014018">
    <property type="entry name" value="SecA_motor_DEAD"/>
</dbReference>
<dbReference type="InterPro" id="IPR011130">
    <property type="entry name" value="SecA_preprotein_X-link_dom"/>
</dbReference>
<dbReference type="InterPro" id="IPR044722">
    <property type="entry name" value="SecA_SF2_C"/>
</dbReference>
<dbReference type="InterPro" id="IPR011116">
    <property type="entry name" value="SecA_Wing/Scaffold"/>
</dbReference>
<dbReference type="InterPro" id="IPR036266">
    <property type="entry name" value="SecA_Wing/Scaffold_sf"/>
</dbReference>
<dbReference type="InterPro" id="IPR036670">
    <property type="entry name" value="SecA_X-link_sf"/>
</dbReference>
<dbReference type="NCBIfam" id="NF009538">
    <property type="entry name" value="PRK12904.1"/>
    <property type="match status" value="1"/>
</dbReference>
<dbReference type="NCBIfam" id="TIGR00963">
    <property type="entry name" value="secA"/>
    <property type="match status" value="1"/>
</dbReference>
<dbReference type="PANTHER" id="PTHR30612:SF0">
    <property type="entry name" value="CHLOROPLAST PROTEIN-TRANSPORTING ATPASE"/>
    <property type="match status" value="1"/>
</dbReference>
<dbReference type="PANTHER" id="PTHR30612">
    <property type="entry name" value="SECA INNER MEMBRANE COMPONENT OF SEC PROTEIN SECRETION SYSTEM"/>
    <property type="match status" value="1"/>
</dbReference>
<dbReference type="Pfam" id="PF21090">
    <property type="entry name" value="P-loop_SecA"/>
    <property type="match status" value="1"/>
</dbReference>
<dbReference type="Pfam" id="PF02810">
    <property type="entry name" value="SEC-C"/>
    <property type="match status" value="1"/>
</dbReference>
<dbReference type="Pfam" id="PF07517">
    <property type="entry name" value="SecA_DEAD"/>
    <property type="match status" value="1"/>
</dbReference>
<dbReference type="Pfam" id="PF01043">
    <property type="entry name" value="SecA_PP_bind"/>
    <property type="match status" value="1"/>
</dbReference>
<dbReference type="Pfam" id="PF07516">
    <property type="entry name" value="SecA_SW"/>
    <property type="match status" value="1"/>
</dbReference>
<dbReference type="PRINTS" id="PR00906">
    <property type="entry name" value="SECA"/>
</dbReference>
<dbReference type="SMART" id="SM00957">
    <property type="entry name" value="SecA_DEAD"/>
    <property type="match status" value="1"/>
</dbReference>
<dbReference type="SMART" id="SM00958">
    <property type="entry name" value="SecA_PP_bind"/>
    <property type="match status" value="1"/>
</dbReference>
<dbReference type="SUPFAM" id="SSF81886">
    <property type="entry name" value="Helical scaffold and wing domains of SecA"/>
    <property type="match status" value="1"/>
</dbReference>
<dbReference type="SUPFAM" id="SSF52540">
    <property type="entry name" value="P-loop containing nucleoside triphosphate hydrolases"/>
    <property type="match status" value="2"/>
</dbReference>
<dbReference type="SUPFAM" id="SSF81767">
    <property type="entry name" value="Pre-protein crosslinking domain of SecA"/>
    <property type="match status" value="1"/>
</dbReference>
<dbReference type="PROSITE" id="PS01312">
    <property type="entry name" value="SECA"/>
    <property type="match status" value="1"/>
</dbReference>
<dbReference type="PROSITE" id="PS51196">
    <property type="entry name" value="SECA_MOTOR_DEAD"/>
    <property type="match status" value="1"/>
</dbReference>
<comment type="function">
    <text evidence="1">Part of the Sec protein translocase complex. Interacts with the SecYEG preprotein conducting channel. Has a central role in coupling the hydrolysis of ATP to the transfer of proteins into and across the cell membrane, serving both as a receptor for the preprotein-SecB complex and as an ATP-driven molecular motor driving the stepwise translocation of polypeptide chains across the membrane.</text>
</comment>
<comment type="catalytic activity">
    <reaction evidence="1">
        <text>ATP + H2O + cellular proteinSide 1 = ADP + phosphate + cellular proteinSide 2.</text>
        <dbReference type="EC" id="7.4.2.8"/>
    </reaction>
</comment>
<comment type="cofactor">
    <cofactor evidence="1">
        <name>Zn(2+)</name>
        <dbReference type="ChEBI" id="CHEBI:29105"/>
    </cofactor>
    <text evidence="1">May bind 1 zinc ion per subunit.</text>
</comment>
<comment type="subunit">
    <text evidence="1">Monomer and homodimer. Part of the essential Sec protein translocation apparatus which comprises SecA, SecYEG and auxiliary proteins SecDF-YajC and YidC.</text>
</comment>
<comment type="subcellular location">
    <subcellularLocation>
        <location evidence="1">Cell inner membrane</location>
        <topology evidence="1">Peripheral membrane protein</topology>
        <orientation evidence="1">Cytoplasmic side</orientation>
    </subcellularLocation>
    <subcellularLocation>
        <location evidence="1">Cytoplasm</location>
    </subcellularLocation>
    <text evidence="1">Distribution is 50-50.</text>
</comment>
<comment type="similarity">
    <text evidence="1">Belongs to the SecA family.</text>
</comment>
<accession>A9BP81</accession>
<keyword id="KW-0067">ATP-binding</keyword>
<keyword id="KW-0997">Cell inner membrane</keyword>
<keyword id="KW-1003">Cell membrane</keyword>
<keyword id="KW-0963">Cytoplasm</keyword>
<keyword id="KW-0472">Membrane</keyword>
<keyword id="KW-0479">Metal-binding</keyword>
<keyword id="KW-0547">Nucleotide-binding</keyword>
<keyword id="KW-0653">Protein transport</keyword>
<keyword id="KW-1185">Reference proteome</keyword>
<keyword id="KW-1278">Translocase</keyword>
<keyword id="KW-0811">Translocation</keyword>
<keyword id="KW-0813">Transport</keyword>
<keyword id="KW-0862">Zinc</keyword>
<evidence type="ECO:0000255" key="1">
    <source>
        <dbReference type="HAMAP-Rule" id="MF_01382"/>
    </source>
</evidence>
<evidence type="ECO:0000256" key="2">
    <source>
        <dbReference type="SAM" id="MobiDB-lite"/>
    </source>
</evidence>